<reference key="1">
    <citation type="journal article" date="1995" name="Plant Mol. Biol. Rep.">
        <title>Complete nucleotide sequence of the Porphyra purpurea chloroplast genome.</title>
        <authorList>
            <person name="Reith M.E."/>
            <person name="Munholland J."/>
        </authorList>
    </citation>
    <scope>NUCLEOTIDE SEQUENCE [LARGE SCALE GENOMIC DNA]</scope>
    <source>
        <strain>Avonport</strain>
    </source>
</reference>
<evidence type="ECO:0000255" key="1">
    <source>
        <dbReference type="HAMAP-Rule" id="MF_00642"/>
    </source>
</evidence>
<sequence length="84" mass="9467">MSGGSTGERPFSDIITSVRYWVIHSITIPALFVAGWLFVSTGLAYDVFGTPRPNEYFTQDRQQVPLVNDRFNAKQELEDLTKGI</sequence>
<gene>
    <name evidence="1" type="primary">psbE</name>
</gene>
<comment type="function">
    <text evidence="1">This b-type cytochrome is tightly associated with the reaction center of photosystem II (PSII). PSII is a light-driven water:plastoquinone oxidoreductase that uses light energy to abstract electrons from H(2)O, generating O(2) and a proton gradient subsequently used for ATP formation. It consists of a core antenna complex that captures photons, and an electron transfer chain that converts photonic excitation into a charge separation.</text>
</comment>
<comment type="cofactor">
    <cofactor evidence="1">
        <name>heme b</name>
        <dbReference type="ChEBI" id="CHEBI:60344"/>
    </cofactor>
    <text evidence="1">With its partner (PsbF) binds heme. PSII binds additional chlorophylls, carotenoids and specific lipids.</text>
</comment>
<comment type="subunit">
    <text evidence="1">Heterodimer of an alpha subunit and a beta subunit. PSII is composed of 1 copy each of membrane proteins PsbA, PsbB, PsbC, PsbD, PsbE, PsbF, PsbH, PsbI, PsbJ, PsbK, PsbL, PsbM, PsbT, PsbX, PsbY, PsbZ, Psb30/Ycf12, at least 3 peripheral proteins of the oxygen-evolving complex and a large number of cofactors. It forms dimeric complexes.</text>
</comment>
<comment type="subcellular location">
    <subcellularLocation>
        <location evidence="1">Plastid</location>
        <location evidence="1">Chloroplast thylakoid membrane</location>
        <topology evidence="1">Single-pass membrane protein</topology>
    </subcellularLocation>
</comment>
<comment type="similarity">
    <text evidence="1">Belongs to the PsbE/PsbF family.</text>
</comment>
<keyword id="KW-0150">Chloroplast</keyword>
<keyword id="KW-0249">Electron transport</keyword>
<keyword id="KW-0349">Heme</keyword>
<keyword id="KW-0408">Iron</keyword>
<keyword id="KW-0472">Membrane</keyword>
<keyword id="KW-0479">Metal-binding</keyword>
<keyword id="KW-0602">Photosynthesis</keyword>
<keyword id="KW-0604">Photosystem II</keyword>
<keyword id="KW-0934">Plastid</keyword>
<keyword id="KW-0793">Thylakoid</keyword>
<keyword id="KW-0812">Transmembrane</keyword>
<keyword id="KW-1133">Transmembrane helix</keyword>
<keyword id="KW-0813">Transport</keyword>
<protein>
    <recommendedName>
        <fullName evidence="1">Cytochrome b559 subunit alpha</fullName>
    </recommendedName>
    <alternativeName>
        <fullName evidence="1">PSII reaction center subunit V</fullName>
    </alternativeName>
</protein>
<name>PSBE_PORPU</name>
<organism>
    <name type="scientific">Porphyra purpurea</name>
    <name type="common">Red seaweed</name>
    <name type="synonym">Ulva purpurea</name>
    <dbReference type="NCBI Taxonomy" id="2787"/>
    <lineage>
        <taxon>Eukaryota</taxon>
        <taxon>Rhodophyta</taxon>
        <taxon>Bangiophyceae</taxon>
        <taxon>Bangiales</taxon>
        <taxon>Bangiaceae</taxon>
        <taxon>Porphyra</taxon>
    </lineage>
</organism>
<accession>P51391</accession>
<feature type="chain" id="PRO_0000200334" description="Cytochrome b559 subunit alpha">
    <location>
        <begin position="1"/>
        <end position="84"/>
    </location>
</feature>
<feature type="transmembrane region" description="Helical" evidence="1">
    <location>
        <begin position="22"/>
        <end position="36"/>
    </location>
</feature>
<feature type="binding site" description="axial binding residue" evidence="1">
    <location>
        <position position="24"/>
    </location>
    <ligand>
        <name>heme</name>
        <dbReference type="ChEBI" id="CHEBI:30413"/>
        <note>ligand shared with beta subunit</note>
    </ligand>
    <ligandPart>
        <name>Fe</name>
        <dbReference type="ChEBI" id="CHEBI:18248"/>
    </ligandPart>
</feature>
<geneLocation type="chloroplast"/>
<dbReference type="EMBL" id="U38804">
    <property type="protein sequence ID" value="AAC08277.1"/>
    <property type="molecule type" value="Genomic_DNA"/>
</dbReference>
<dbReference type="PIR" id="S73312">
    <property type="entry name" value="S73312"/>
</dbReference>
<dbReference type="RefSeq" id="NP_054001.1">
    <property type="nucleotide sequence ID" value="NC_000925.1"/>
</dbReference>
<dbReference type="SMR" id="P51391"/>
<dbReference type="GeneID" id="810032"/>
<dbReference type="GO" id="GO:0009535">
    <property type="term" value="C:chloroplast thylakoid membrane"/>
    <property type="evidence" value="ECO:0007669"/>
    <property type="project" value="UniProtKB-SubCell"/>
</dbReference>
<dbReference type="GO" id="GO:0009539">
    <property type="term" value="C:photosystem II reaction center"/>
    <property type="evidence" value="ECO:0007669"/>
    <property type="project" value="InterPro"/>
</dbReference>
<dbReference type="GO" id="GO:0009055">
    <property type="term" value="F:electron transfer activity"/>
    <property type="evidence" value="ECO:0007669"/>
    <property type="project" value="UniProtKB-UniRule"/>
</dbReference>
<dbReference type="GO" id="GO:0020037">
    <property type="term" value="F:heme binding"/>
    <property type="evidence" value="ECO:0007669"/>
    <property type="project" value="InterPro"/>
</dbReference>
<dbReference type="GO" id="GO:0005506">
    <property type="term" value="F:iron ion binding"/>
    <property type="evidence" value="ECO:0007669"/>
    <property type="project" value="UniProtKB-UniRule"/>
</dbReference>
<dbReference type="GO" id="GO:0009767">
    <property type="term" value="P:photosynthetic electron transport chain"/>
    <property type="evidence" value="ECO:0007669"/>
    <property type="project" value="InterPro"/>
</dbReference>
<dbReference type="Gene3D" id="1.20.5.860">
    <property type="entry name" value="Photosystem II cytochrome b559, alpha subunit"/>
    <property type="match status" value="1"/>
</dbReference>
<dbReference type="HAMAP" id="MF_00642">
    <property type="entry name" value="PSII_PsbE"/>
    <property type="match status" value="1"/>
</dbReference>
<dbReference type="InterPro" id="IPR006217">
    <property type="entry name" value="PSII_cyt_b559_asu"/>
</dbReference>
<dbReference type="InterPro" id="IPR037025">
    <property type="entry name" value="PSII_cyt_b559_asu_sf"/>
</dbReference>
<dbReference type="InterPro" id="IPR006216">
    <property type="entry name" value="PSII_cyt_b559_CS"/>
</dbReference>
<dbReference type="InterPro" id="IPR013081">
    <property type="entry name" value="PSII_cyt_b559_N"/>
</dbReference>
<dbReference type="InterPro" id="IPR013082">
    <property type="entry name" value="PSII_cytb559_asu_lum"/>
</dbReference>
<dbReference type="NCBIfam" id="TIGR01332">
    <property type="entry name" value="cyt_b559_alpha"/>
    <property type="match status" value="1"/>
</dbReference>
<dbReference type="PANTHER" id="PTHR33391">
    <property type="entry name" value="CYTOCHROME B559 SUBUNIT BETA-RELATED"/>
    <property type="match status" value="1"/>
</dbReference>
<dbReference type="PANTHER" id="PTHR33391:SF9">
    <property type="entry name" value="CYTOCHROME B559 SUBUNIT BETA-RELATED"/>
    <property type="match status" value="1"/>
</dbReference>
<dbReference type="Pfam" id="PF00283">
    <property type="entry name" value="Cytochrom_B559"/>
    <property type="match status" value="1"/>
</dbReference>
<dbReference type="Pfam" id="PF00284">
    <property type="entry name" value="Cytochrom_B559a"/>
    <property type="match status" value="1"/>
</dbReference>
<dbReference type="PIRSF" id="PIRSF000036">
    <property type="entry name" value="PsbE"/>
    <property type="match status" value="1"/>
</dbReference>
<dbReference type="SUPFAM" id="SSF161045">
    <property type="entry name" value="Cytochrome b559 subunits"/>
    <property type="match status" value="1"/>
</dbReference>
<dbReference type="PROSITE" id="PS00537">
    <property type="entry name" value="CYTOCHROME_B559"/>
    <property type="match status" value="1"/>
</dbReference>
<proteinExistence type="inferred from homology"/>